<accession>Q9PLX6</accession>
<accession>Q0P7S9</accession>
<dbReference type="EMBL" id="AL111168">
    <property type="protein sequence ID" value="CAL35796.1"/>
    <property type="molecule type" value="Genomic_DNA"/>
</dbReference>
<dbReference type="PIR" id="B81268">
    <property type="entry name" value="B81268"/>
</dbReference>
<dbReference type="RefSeq" id="WP_002851214.1">
    <property type="nucleotide sequence ID" value="NZ_SZUC01000002.1"/>
</dbReference>
<dbReference type="RefSeq" id="YP_002345068.1">
    <property type="nucleotide sequence ID" value="NC_002163.1"/>
</dbReference>
<dbReference type="SMR" id="Q9PLX6"/>
<dbReference type="IntAct" id="Q9PLX6">
    <property type="interactions" value="5"/>
</dbReference>
<dbReference type="STRING" id="192222.Cj1702c"/>
<dbReference type="PaxDb" id="192222-Cj1702c"/>
<dbReference type="EnsemblBacteria" id="CAL35796">
    <property type="protein sequence ID" value="CAL35796"/>
    <property type="gene ID" value="Cj1702c"/>
</dbReference>
<dbReference type="GeneID" id="905976"/>
<dbReference type="KEGG" id="cje:Cj1702c"/>
<dbReference type="PATRIC" id="fig|192222.6.peg.1676"/>
<dbReference type="eggNOG" id="COG0091">
    <property type="taxonomic scope" value="Bacteria"/>
</dbReference>
<dbReference type="HOGENOM" id="CLU_083987_3_2_7"/>
<dbReference type="OrthoDB" id="9805969at2"/>
<dbReference type="Proteomes" id="UP000000799">
    <property type="component" value="Chromosome"/>
</dbReference>
<dbReference type="GO" id="GO:0022625">
    <property type="term" value="C:cytosolic large ribosomal subunit"/>
    <property type="evidence" value="ECO:0007669"/>
    <property type="project" value="TreeGrafter"/>
</dbReference>
<dbReference type="GO" id="GO:0019843">
    <property type="term" value="F:rRNA binding"/>
    <property type="evidence" value="ECO:0007669"/>
    <property type="project" value="UniProtKB-UniRule"/>
</dbReference>
<dbReference type="GO" id="GO:0003735">
    <property type="term" value="F:structural constituent of ribosome"/>
    <property type="evidence" value="ECO:0007669"/>
    <property type="project" value="InterPro"/>
</dbReference>
<dbReference type="GO" id="GO:0006412">
    <property type="term" value="P:translation"/>
    <property type="evidence" value="ECO:0007669"/>
    <property type="project" value="UniProtKB-UniRule"/>
</dbReference>
<dbReference type="CDD" id="cd00336">
    <property type="entry name" value="Ribosomal_L22"/>
    <property type="match status" value="1"/>
</dbReference>
<dbReference type="FunFam" id="3.90.470.10:FF:000007">
    <property type="entry name" value="50S ribosomal protein L22"/>
    <property type="match status" value="1"/>
</dbReference>
<dbReference type="Gene3D" id="3.90.470.10">
    <property type="entry name" value="Ribosomal protein L22/L17"/>
    <property type="match status" value="1"/>
</dbReference>
<dbReference type="HAMAP" id="MF_01331_B">
    <property type="entry name" value="Ribosomal_uL22_B"/>
    <property type="match status" value="1"/>
</dbReference>
<dbReference type="InterPro" id="IPR001063">
    <property type="entry name" value="Ribosomal_uL22"/>
</dbReference>
<dbReference type="InterPro" id="IPR005727">
    <property type="entry name" value="Ribosomal_uL22_bac/chlpt-type"/>
</dbReference>
<dbReference type="InterPro" id="IPR047867">
    <property type="entry name" value="Ribosomal_uL22_bac/org-type"/>
</dbReference>
<dbReference type="InterPro" id="IPR018260">
    <property type="entry name" value="Ribosomal_uL22_CS"/>
</dbReference>
<dbReference type="InterPro" id="IPR036394">
    <property type="entry name" value="Ribosomal_uL22_sf"/>
</dbReference>
<dbReference type="NCBIfam" id="TIGR01044">
    <property type="entry name" value="rplV_bact"/>
    <property type="match status" value="1"/>
</dbReference>
<dbReference type="PANTHER" id="PTHR13501">
    <property type="entry name" value="CHLOROPLAST 50S RIBOSOMAL PROTEIN L22-RELATED"/>
    <property type="match status" value="1"/>
</dbReference>
<dbReference type="PANTHER" id="PTHR13501:SF8">
    <property type="entry name" value="LARGE RIBOSOMAL SUBUNIT PROTEIN UL22M"/>
    <property type="match status" value="1"/>
</dbReference>
<dbReference type="Pfam" id="PF00237">
    <property type="entry name" value="Ribosomal_L22"/>
    <property type="match status" value="1"/>
</dbReference>
<dbReference type="SUPFAM" id="SSF54843">
    <property type="entry name" value="Ribosomal protein L22"/>
    <property type="match status" value="1"/>
</dbReference>
<dbReference type="PROSITE" id="PS00464">
    <property type="entry name" value="RIBOSOMAL_L22"/>
    <property type="match status" value="1"/>
</dbReference>
<evidence type="ECO:0000255" key="1">
    <source>
        <dbReference type="HAMAP-Rule" id="MF_01331"/>
    </source>
</evidence>
<evidence type="ECO:0000256" key="2">
    <source>
        <dbReference type="SAM" id="MobiDB-lite"/>
    </source>
</evidence>
<evidence type="ECO:0000305" key="3"/>
<reference key="1">
    <citation type="journal article" date="2000" name="Nature">
        <title>The genome sequence of the food-borne pathogen Campylobacter jejuni reveals hypervariable sequences.</title>
        <authorList>
            <person name="Parkhill J."/>
            <person name="Wren B.W."/>
            <person name="Mungall K.L."/>
            <person name="Ketley J.M."/>
            <person name="Churcher C.M."/>
            <person name="Basham D."/>
            <person name="Chillingworth T."/>
            <person name="Davies R.M."/>
            <person name="Feltwell T."/>
            <person name="Holroyd S."/>
            <person name="Jagels K."/>
            <person name="Karlyshev A.V."/>
            <person name="Moule S."/>
            <person name="Pallen M.J."/>
            <person name="Penn C.W."/>
            <person name="Quail M.A."/>
            <person name="Rajandream M.A."/>
            <person name="Rutherford K.M."/>
            <person name="van Vliet A.H.M."/>
            <person name="Whitehead S."/>
            <person name="Barrell B.G."/>
        </authorList>
    </citation>
    <scope>NUCLEOTIDE SEQUENCE [LARGE SCALE GENOMIC DNA]</scope>
    <source>
        <strain>ATCC 700819 / NCTC 11168</strain>
    </source>
</reference>
<protein>
    <recommendedName>
        <fullName evidence="1">Large ribosomal subunit protein uL22</fullName>
    </recommendedName>
    <alternativeName>
        <fullName evidence="3">50S ribosomal protein L22</fullName>
    </alternativeName>
</protein>
<sequence length="141" mass="15243">MSKALIKFIRLSPTKARLIAREVQGMNAELAMASLKFMPNKGAKYIANAISSAVANGGFEANEVIVKSCRVDAAAVLKRFRPRARGSASRIRKPTSHILVEVAKAEVKSEEKKTVAKKTTTTKAPAKKTTSTKKATVKKES</sequence>
<gene>
    <name evidence="1" type="primary">rplV</name>
    <name type="ordered locus">Cj1702c</name>
</gene>
<feature type="chain" id="PRO_0000125133" description="Large ribosomal subunit protein uL22">
    <location>
        <begin position="1"/>
        <end position="141"/>
    </location>
</feature>
<feature type="region of interest" description="Disordered" evidence="2">
    <location>
        <begin position="108"/>
        <end position="141"/>
    </location>
</feature>
<feature type="compositionally biased region" description="Low complexity" evidence="2">
    <location>
        <begin position="117"/>
        <end position="134"/>
    </location>
</feature>
<proteinExistence type="inferred from homology"/>
<organism>
    <name type="scientific">Campylobacter jejuni subsp. jejuni serotype O:2 (strain ATCC 700819 / NCTC 11168)</name>
    <dbReference type="NCBI Taxonomy" id="192222"/>
    <lineage>
        <taxon>Bacteria</taxon>
        <taxon>Pseudomonadati</taxon>
        <taxon>Campylobacterota</taxon>
        <taxon>Epsilonproteobacteria</taxon>
        <taxon>Campylobacterales</taxon>
        <taxon>Campylobacteraceae</taxon>
        <taxon>Campylobacter</taxon>
    </lineage>
</organism>
<keyword id="KW-1185">Reference proteome</keyword>
<keyword id="KW-0687">Ribonucleoprotein</keyword>
<keyword id="KW-0689">Ribosomal protein</keyword>
<keyword id="KW-0694">RNA-binding</keyword>
<keyword id="KW-0699">rRNA-binding</keyword>
<name>RL22_CAMJE</name>
<comment type="function">
    <text evidence="1">This protein binds specifically to 23S rRNA; its binding is stimulated by other ribosomal proteins, e.g. L4, L17, and L20. It is important during the early stages of 50S assembly. It makes multiple contacts with different domains of the 23S rRNA in the assembled 50S subunit and ribosome (By similarity).</text>
</comment>
<comment type="function">
    <text evidence="1">The globular domain of the protein is located near the polypeptide exit tunnel on the outside of the subunit, while an extended beta-hairpin is found that lines the wall of the exit tunnel in the center of the 70S ribosome.</text>
</comment>
<comment type="subunit">
    <text evidence="1">Part of the 50S ribosomal subunit.</text>
</comment>
<comment type="similarity">
    <text evidence="1">Belongs to the universal ribosomal protein uL22 family.</text>
</comment>